<accession>B3DY05</accession>
<comment type="catalytic activity">
    <reaction evidence="1">
        <text>(S)-4-amino-5-oxopentanoate = 5-aminolevulinate</text>
        <dbReference type="Rhea" id="RHEA:14265"/>
        <dbReference type="ChEBI" id="CHEBI:57501"/>
        <dbReference type="ChEBI" id="CHEBI:356416"/>
        <dbReference type="EC" id="5.4.3.8"/>
    </reaction>
</comment>
<comment type="cofactor">
    <cofactor evidence="1">
        <name>pyridoxal 5'-phosphate</name>
        <dbReference type="ChEBI" id="CHEBI:597326"/>
    </cofactor>
</comment>
<comment type="pathway">
    <text evidence="1">Porphyrin-containing compound metabolism; protoporphyrin-IX biosynthesis; 5-aminolevulinate from L-glutamyl-tRNA(Glu): step 2/2.</text>
</comment>
<comment type="subunit">
    <text evidence="1">Homodimer.</text>
</comment>
<comment type="subcellular location">
    <subcellularLocation>
        <location evidence="1">Cytoplasm</location>
    </subcellularLocation>
</comment>
<comment type="similarity">
    <text evidence="1">Belongs to the class-III pyridoxal-phosphate-dependent aminotransferase family. HemL subfamily.</text>
</comment>
<reference key="1">
    <citation type="journal article" date="2008" name="Biol. Direct">
        <title>Complete genome sequence of the extremely acidophilic methanotroph isolate V4, Methylacidiphilum infernorum, a representative of the bacterial phylum Verrucomicrobia.</title>
        <authorList>
            <person name="Hou S."/>
            <person name="Makarova K.S."/>
            <person name="Saw J.H."/>
            <person name="Senin P."/>
            <person name="Ly B.V."/>
            <person name="Zhou Z."/>
            <person name="Ren Y."/>
            <person name="Wang J."/>
            <person name="Galperin M.Y."/>
            <person name="Omelchenko M.V."/>
            <person name="Wolf Y.I."/>
            <person name="Yutin N."/>
            <person name="Koonin E.V."/>
            <person name="Stott M.B."/>
            <person name="Mountain B.W."/>
            <person name="Crowe M.A."/>
            <person name="Smirnova A.V."/>
            <person name="Dunfield P.F."/>
            <person name="Feng L."/>
            <person name="Wang L."/>
            <person name="Alam M."/>
        </authorList>
    </citation>
    <scope>NUCLEOTIDE SEQUENCE [LARGE SCALE GENOMIC DNA]</scope>
    <source>
        <strain>Isolate V4</strain>
    </source>
</reference>
<dbReference type="EC" id="5.4.3.8" evidence="1"/>
<dbReference type="EMBL" id="CP000975">
    <property type="protein sequence ID" value="ACD83957.1"/>
    <property type="molecule type" value="Genomic_DNA"/>
</dbReference>
<dbReference type="SMR" id="B3DY05"/>
<dbReference type="STRING" id="481448.Minf_1903"/>
<dbReference type="KEGG" id="min:Minf_1903"/>
<dbReference type="eggNOG" id="COG0001">
    <property type="taxonomic scope" value="Bacteria"/>
</dbReference>
<dbReference type="HOGENOM" id="CLU_016922_1_5_0"/>
<dbReference type="OrthoDB" id="9807885at2"/>
<dbReference type="UniPathway" id="UPA00251">
    <property type="reaction ID" value="UER00317"/>
</dbReference>
<dbReference type="Proteomes" id="UP000009149">
    <property type="component" value="Chromosome"/>
</dbReference>
<dbReference type="GO" id="GO:0005737">
    <property type="term" value="C:cytoplasm"/>
    <property type="evidence" value="ECO:0007669"/>
    <property type="project" value="UniProtKB-SubCell"/>
</dbReference>
<dbReference type="GO" id="GO:0042286">
    <property type="term" value="F:glutamate-1-semialdehyde 2,1-aminomutase activity"/>
    <property type="evidence" value="ECO:0007669"/>
    <property type="project" value="UniProtKB-UniRule"/>
</dbReference>
<dbReference type="GO" id="GO:0030170">
    <property type="term" value="F:pyridoxal phosphate binding"/>
    <property type="evidence" value="ECO:0007669"/>
    <property type="project" value="InterPro"/>
</dbReference>
<dbReference type="GO" id="GO:0008483">
    <property type="term" value="F:transaminase activity"/>
    <property type="evidence" value="ECO:0007669"/>
    <property type="project" value="InterPro"/>
</dbReference>
<dbReference type="GO" id="GO:0006782">
    <property type="term" value="P:protoporphyrinogen IX biosynthetic process"/>
    <property type="evidence" value="ECO:0007669"/>
    <property type="project" value="UniProtKB-UniRule"/>
</dbReference>
<dbReference type="CDD" id="cd00610">
    <property type="entry name" value="OAT_like"/>
    <property type="match status" value="1"/>
</dbReference>
<dbReference type="FunFam" id="3.40.640.10:FF:000021">
    <property type="entry name" value="Glutamate-1-semialdehyde 2,1-aminomutase"/>
    <property type="match status" value="1"/>
</dbReference>
<dbReference type="Gene3D" id="3.90.1150.10">
    <property type="entry name" value="Aspartate Aminotransferase, domain 1"/>
    <property type="match status" value="1"/>
</dbReference>
<dbReference type="Gene3D" id="3.40.640.10">
    <property type="entry name" value="Type I PLP-dependent aspartate aminotransferase-like (Major domain)"/>
    <property type="match status" value="1"/>
</dbReference>
<dbReference type="HAMAP" id="MF_00375">
    <property type="entry name" value="HemL_aminotrans_3"/>
    <property type="match status" value="1"/>
</dbReference>
<dbReference type="InterPro" id="IPR004639">
    <property type="entry name" value="4pyrrol_synth_GluAld_NH2Trfase"/>
</dbReference>
<dbReference type="InterPro" id="IPR005814">
    <property type="entry name" value="Aminotrans_3"/>
</dbReference>
<dbReference type="InterPro" id="IPR049704">
    <property type="entry name" value="Aminotrans_3_PPA_site"/>
</dbReference>
<dbReference type="InterPro" id="IPR015424">
    <property type="entry name" value="PyrdxlP-dep_Trfase"/>
</dbReference>
<dbReference type="InterPro" id="IPR015421">
    <property type="entry name" value="PyrdxlP-dep_Trfase_major"/>
</dbReference>
<dbReference type="InterPro" id="IPR015422">
    <property type="entry name" value="PyrdxlP-dep_Trfase_small"/>
</dbReference>
<dbReference type="NCBIfam" id="TIGR00713">
    <property type="entry name" value="hemL"/>
    <property type="match status" value="1"/>
</dbReference>
<dbReference type="NCBIfam" id="NF000818">
    <property type="entry name" value="PRK00062.1"/>
    <property type="match status" value="1"/>
</dbReference>
<dbReference type="PANTHER" id="PTHR43713">
    <property type="entry name" value="GLUTAMATE-1-SEMIALDEHYDE 2,1-AMINOMUTASE"/>
    <property type="match status" value="1"/>
</dbReference>
<dbReference type="PANTHER" id="PTHR43713:SF3">
    <property type="entry name" value="GLUTAMATE-1-SEMIALDEHYDE 2,1-AMINOMUTASE 1, CHLOROPLASTIC-RELATED"/>
    <property type="match status" value="1"/>
</dbReference>
<dbReference type="Pfam" id="PF00202">
    <property type="entry name" value="Aminotran_3"/>
    <property type="match status" value="1"/>
</dbReference>
<dbReference type="SUPFAM" id="SSF53383">
    <property type="entry name" value="PLP-dependent transferases"/>
    <property type="match status" value="1"/>
</dbReference>
<dbReference type="PROSITE" id="PS00600">
    <property type="entry name" value="AA_TRANSFER_CLASS_3"/>
    <property type="match status" value="1"/>
</dbReference>
<sequence length="433" mass="46876">MIKLEMDFVLSEKLWKEAQEIFPGGVNSPVRSFQSVGGFPFYVSRAKGSKITDVDGNDYTDYVCSWGALIHGHAHPAVVRAVGEALKDGTSYGANSPLEIKLARLIQSAMPSIEKIRFVNSGTEACMTAIRIARGVSGREKIMKFEGCYHGHSDSLLVKAGSGALTTAVPNSAGIPPCLSSLTLVLPWNDRQTLLEAFKRQGKETAAVILEPVLANCGLIPPEEGFLECLFKTAREYGTLVIFDEVITGFRLALGGAQEIFGIQPDLTVLGKIIGGGLPVGAVGGKKEIMDSLSPLGSVYQAGTLSGNPLAMAAGIAQLEQIKKAPPYSHLETLGSELESAIKDIQRKLPIPFQFNRRGSLFSFFFTAKNIRSATDVYSVDKKRFSCFFTSLLHSGIFLPPSPFETAFLSTAHSETDIDELVKFVYDILKKMP</sequence>
<protein>
    <recommendedName>
        <fullName evidence="1">Glutamate-1-semialdehyde 2,1-aminomutase</fullName>
        <shortName evidence="1">GSA</shortName>
        <ecNumber evidence="1">5.4.3.8</ecNumber>
    </recommendedName>
    <alternativeName>
        <fullName evidence="1">Glutamate-1-semialdehyde aminotransferase</fullName>
        <shortName evidence="1">GSA-AT</shortName>
    </alternativeName>
</protein>
<keyword id="KW-0963">Cytoplasm</keyword>
<keyword id="KW-0413">Isomerase</keyword>
<keyword id="KW-0627">Porphyrin biosynthesis</keyword>
<keyword id="KW-0663">Pyridoxal phosphate</keyword>
<feature type="chain" id="PRO_1000201025" description="Glutamate-1-semialdehyde 2,1-aminomutase">
    <location>
        <begin position="1"/>
        <end position="433"/>
    </location>
</feature>
<feature type="modified residue" description="N6-(pyridoxal phosphate)lysine" evidence="1">
    <location>
        <position position="272"/>
    </location>
</feature>
<organism>
    <name type="scientific">Methylacidiphilum infernorum (isolate V4)</name>
    <name type="common">Methylokorus infernorum (strain V4)</name>
    <dbReference type="NCBI Taxonomy" id="481448"/>
    <lineage>
        <taxon>Bacteria</taxon>
        <taxon>Pseudomonadati</taxon>
        <taxon>Verrucomicrobiota</taxon>
        <taxon>Methylacidiphilae</taxon>
        <taxon>Methylacidiphilales</taxon>
        <taxon>Methylacidiphilaceae</taxon>
        <taxon>Methylacidiphilum (ex Ratnadevi et al. 2023)</taxon>
    </lineage>
</organism>
<proteinExistence type="inferred from homology"/>
<evidence type="ECO:0000255" key="1">
    <source>
        <dbReference type="HAMAP-Rule" id="MF_00375"/>
    </source>
</evidence>
<name>GSA_METI4</name>
<gene>
    <name evidence="1" type="primary">hemL</name>
    <name type="ordered locus">Minf_1903</name>
</gene>